<dbReference type="EC" id="2.8.1.8" evidence="1"/>
<dbReference type="EMBL" id="GG692431">
    <property type="protein sequence ID" value="EER38732.1"/>
    <property type="molecule type" value="Genomic_DNA"/>
</dbReference>
<dbReference type="SMR" id="C6HLY2"/>
<dbReference type="STRING" id="544712.C6HLY2"/>
<dbReference type="VEuPathDB" id="FungiDB:HCDG_07601"/>
<dbReference type="eggNOG" id="KOG2672">
    <property type="taxonomic scope" value="Eukaryota"/>
</dbReference>
<dbReference type="HOGENOM" id="CLU_033144_0_0_1"/>
<dbReference type="OMA" id="PYCDIDF"/>
<dbReference type="OrthoDB" id="4393at299071"/>
<dbReference type="UniPathway" id="UPA00538">
    <property type="reaction ID" value="UER00593"/>
</dbReference>
<dbReference type="Proteomes" id="UP000002624">
    <property type="component" value="Unassembled WGS sequence"/>
</dbReference>
<dbReference type="GO" id="GO:0005739">
    <property type="term" value="C:mitochondrion"/>
    <property type="evidence" value="ECO:0007669"/>
    <property type="project" value="UniProtKB-SubCell"/>
</dbReference>
<dbReference type="GO" id="GO:0051539">
    <property type="term" value="F:4 iron, 4 sulfur cluster binding"/>
    <property type="evidence" value="ECO:0007669"/>
    <property type="project" value="UniProtKB-UniRule"/>
</dbReference>
<dbReference type="GO" id="GO:0016992">
    <property type="term" value="F:lipoate synthase activity"/>
    <property type="evidence" value="ECO:0007669"/>
    <property type="project" value="UniProtKB-UniRule"/>
</dbReference>
<dbReference type="GO" id="GO:0046872">
    <property type="term" value="F:metal ion binding"/>
    <property type="evidence" value="ECO:0007669"/>
    <property type="project" value="UniProtKB-KW"/>
</dbReference>
<dbReference type="CDD" id="cd01335">
    <property type="entry name" value="Radical_SAM"/>
    <property type="match status" value="1"/>
</dbReference>
<dbReference type="FunFam" id="3.20.20.70:FF:000036">
    <property type="entry name" value="Lipoyl synthase, mitochondrial"/>
    <property type="match status" value="1"/>
</dbReference>
<dbReference type="Gene3D" id="3.20.20.70">
    <property type="entry name" value="Aldolase class I"/>
    <property type="match status" value="1"/>
</dbReference>
<dbReference type="HAMAP" id="MF_00206">
    <property type="entry name" value="Lipoyl_synth"/>
    <property type="match status" value="1"/>
</dbReference>
<dbReference type="InterPro" id="IPR013785">
    <property type="entry name" value="Aldolase_TIM"/>
</dbReference>
<dbReference type="InterPro" id="IPR006638">
    <property type="entry name" value="Elp3/MiaA/NifB-like_rSAM"/>
</dbReference>
<dbReference type="InterPro" id="IPR031691">
    <property type="entry name" value="LIAS_N"/>
</dbReference>
<dbReference type="InterPro" id="IPR003698">
    <property type="entry name" value="Lipoyl_synth"/>
</dbReference>
<dbReference type="InterPro" id="IPR007197">
    <property type="entry name" value="rSAM"/>
</dbReference>
<dbReference type="NCBIfam" id="TIGR00510">
    <property type="entry name" value="lipA"/>
    <property type="match status" value="1"/>
</dbReference>
<dbReference type="NCBIfam" id="NF004019">
    <property type="entry name" value="PRK05481.1"/>
    <property type="match status" value="1"/>
</dbReference>
<dbReference type="NCBIfam" id="NF009544">
    <property type="entry name" value="PRK12928.1"/>
    <property type="match status" value="1"/>
</dbReference>
<dbReference type="PANTHER" id="PTHR10949">
    <property type="entry name" value="LIPOYL SYNTHASE"/>
    <property type="match status" value="1"/>
</dbReference>
<dbReference type="PANTHER" id="PTHR10949:SF0">
    <property type="entry name" value="LIPOYL SYNTHASE, MITOCHONDRIAL"/>
    <property type="match status" value="1"/>
</dbReference>
<dbReference type="Pfam" id="PF16881">
    <property type="entry name" value="LIAS_N"/>
    <property type="match status" value="1"/>
</dbReference>
<dbReference type="Pfam" id="PF04055">
    <property type="entry name" value="Radical_SAM"/>
    <property type="match status" value="1"/>
</dbReference>
<dbReference type="SFLD" id="SFLDF00271">
    <property type="entry name" value="lipoyl_synthase"/>
    <property type="match status" value="1"/>
</dbReference>
<dbReference type="SFLD" id="SFLDS00029">
    <property type="entry name" value="Radical_SAM"/>
    <property type="match status" value="1"/>
</dbReference>
<dbReference type="SMART" id="SM00729">
    <property type="entry name" value="Elp3"/>
    <property type="match status" value="1"/>
</dbReference>
<dbReference type="SUPFAM" id="SSF102114">
    <property type="entry name" value="Radical SAM enzymes"/>
    <property type="match status" value="1"/>
</dbReference>
<dbReference type="PROSITE" id="PS51918">
    <property type="entry name" value="RADICAL_SAM"/>
    <property type="match status" value="1"/>
</dbReference>
<protein>
    <recommendedName>
        <fullName evidence="1">Lipoyl synthase, mitochondrial</fullName>
        <ecNumber evidence="1">2.8.1.8</ecNumber>
    </recommendedName>
    <alternativeName>
        <fullName evidence="1">Lipoate synthase</fullName>
        <shortName evidence="1">LS</shortName>
        <shortName evidence="1">Lip-syn</shortName>
    </alternativeName>
    <alternativeName>
        <fullName evidence="1">Lipoic acid synthase</fullName>
    </alternativeName>
</protein>
<organism>
    <name type="scientific">Ajellomyces capsulatus (strain H143)</name>
    <name type="common">Darling's disease fungus</name>
    <name type="synonym">Histoplasma capsulatum</name>
    <dbReference type="NCBI Taxonomy" id="544712"/>
    <lineage>
        <taxon>Eukaryota</taxon>
        <taxon>Fungi</taxon>
        <taxon>Dikarya</taxon>
        <taxon>Ascomycota</taxon>
        <taxon>Pezizomycotina</taxon>
        <taxon>Eurotiomycetes</taxon>
        <taxon>Eurotiomycetidae</taxon>
        <taxon>Onygenales</taxon>
        <taxon>Ajellomycetaceae</taxon>
        <taxon>Histoplasma</taxon>
    </lineage>
</organism>
<evidence type="ECO:0000255" key="1">
    <source>
        <dbReference type="HAMAP-Rule" id="MF_03123"/>
    </source>
</evidence>
<evidence type="ECO:0000255" key="2">
    <source>
        <dbReference type="PROSITE-ProRule" id="PRU01266"/>
    </source>
</evidence>
<evidence type="ECO:0000256" key="3">
    <source>
        <dbReference type="SAM" id="MobiDB-lite"/>
    </source>
</evidence>
<name>LIPA_AJECH</name>
<keyword id="KW-0004">4Fe-4S</keyword>
<keyword id="KW-0408">Iron</keyword>
<keyword id="KW-0411">Iron-sulfur</keyword>
<keyword id="KW-0479">Metal-binding</keyword>
<keyword id="KW-0496">Mitochondrion</keyword>
<keyword id="KW-1185">Reference proteome</keyword>
<keyword id="KW-0949">S-adenosyl-L-methionine</keyword>
<keyword id="KW-0808">Transferase</keyword>
<keyword id="KW-0809">Transit peptide</keyword>
<reference key="1">
    <citation type="submission" date="2009-05" db="EMBL/GenBank/DDBJ databases">
        <title>The genome sequence of Ajellomyces capsulatus strain H143.</title>
        <authorList>
            <person name="Champion M."/>
            <person name="Cuomo C.A."/>
            <person name="Ma L.-J."/>
            <person name="Henn M.R."/>
            <person name="Sil A."/>
            <person name="Goldman B."/>
            <person name="Young S.K."/>
            <person name="Kodira C.D."/>
            <person name="Zeng Q."/>
            <person name="Koehrsen M."/>
            <person name="Alvarado L."/>
            <person name="Berlin A.M."/>
            <person name="Borenstein D."/>
            <person name="Chen Z."/>
            <person name="Engels R."/>
            <person name="Freedman E."/>
            <person name="Gellesch M."/>
            <person name="Goldberg J."/>
            <person name="Griggs A."/>
            <person name="Gujja S."/>
            <person name="Heiman D.I."/>
            <person name="Hepburn T.A."/>
            <person name="Howarth C."/>
            <person name="Jen D."/>
            <person name="Larson L."/>
            <person name="Lewis B."/>
            <person name="Mehta T."/>
            <person name="Park D."/>
            <person name="Pearson M."/>
            <person name="Roberts A."/>
            <person name="Saif S."/>
            <person name="Shea T.D."/>
            <person name="Shenoy N."/>
            <person name="Sisk P."/>
            <person name="Stolte C."/>
            <person name="Sykes S."/>
            <person name="Walk T."/>
            <person name="White J."/>
            <person name="Yandava C."/>
            <person name="Klein B."/>
            <person name="McEwen J.G."/>
            <person name="Puccia R."/>
            <person name="Goldman G.H."/>
            <person name="Felipe M.S."/>
            <person name="Nino-Vega G."/>
            <person name="San-Blas G."/>
            <person name="Taylor J.W."/>
            <person name="Mendoza L."/>
            <person name="Galagan J.E."/>
            <person name="Nusbaum C."/>
            <person name="Birren B.W."/>
        </authorList>
    </citation>
    <scope>NUCLEOTIDE SEQUENCE [LARGE SCALE GENOMIC DNA]</scope>
    <source>
        <strain>H143</strain>
    </source>
</reference>
<accession>C6HLY2</accession>
<proteinExistence type="inferred from homology"/>
<comment type="function">
    <text evidence="1">Catalyzes the radical-mediated insertion of two sulfur atoms into the C-6 and C-8 positions of the octanoyl moiety bound to the lipoyl domains of lipoate-dependent enzymes, thereby converting the octanoylated domains into lipoylated derivatives.</text>
</comment>
<comment type="catalytic activity">
    <reaction evidence="1">
        <text>[[Fe-S] cluster scaffold protein carrying a second [4Fe-4S](2+) cluster] + N(6)-octanoyl-L-lysyl-[protein] + 2 oxidized [2Fe-2S]-[ferredoxin] + 2 S-adenosyl-L-methionine + 4 H(+) = [[Fe-S] cluster scaffold protein] + N(6)-[(R)-dihydrolipoyl]-L-lysyl-[protein] + 4 Fe(3+) + 2 hydrogen sulfide + 2 5'-deoxyadenosine + 2 L-methionine + 2 reduced [2Fe-2S]-[ferredoxin]</text>
        <dbReference type="Rhea" id="RHEA:16585"/>
        <dbReference type="Rhea" id="RHEA-COMP:9928"/>
        <dbReference type="Rhea" id="RHEA-COMP:10000"/>
        <dbReference type="Rhea" id="RHEA-COMP:10001"/>
        <dbReference type="Rhea" id="RHEA-COMP:10475"/>
        <dbReference type="Rhea" id="RHEA-COMP:14568"/>
        <dbReference type="Rhea" id="RHEA-COMP:14569"/>
        <dbReference type="ChEBI" id="CHEBI:15378"/>
        <dbReference type="ChEBI" id="CHEBI:17319"/>
        <dbReference type="ChEBI" id="CHEBI:29034"/>
        <dbReference type="ChEBI" id="CHEBI:29919"/>
        <dbReference type="ChEBI" id="CHEBI:33722"/>
        <dbReference type="ChEBI" id="CHEBI:33737"/>
        <dbReference type="ChEBI" id="CHEBI:33738"/>
        <dbReference type="ChEBI" id="CHEBI:57844"/>
        <dbReference type="ChEBI" id="CHEBI:59789"/>
        <dbReference type="ChEBI" id="CHEBI:78809"/>
        <dbReference type="ChEBI" id="CHEBI:83100"/>
        <dbReference type="EC" id="2.8.1.8"/>
    </reaction>
</comment>
<comment type="cofactor">
    <cofactor evidence="1">
        <name>[4Fe-4S] cluster</name>
        <dbReference type="ChEBI" id="CHEBI:49883"/>
    </cofactor>
    <text evidence="1">Binds 2 [4Fe-4S] clusters per subunit. One cluster is coordinated with 3 cysteines and an exchangeable S-adenosyl-L-methionine.</text>
</comment>
<comment type="pathway">
    <text evidence="1">Protein modification; protein lipoylation via endogenous pathway; protein N(6)-(lipoyl)lysine from octanoyl-[acyl-carrier-protein]: step 2/2.</text>
</comment>
<comment type="subcellular location">
    <subcellularLocation>
        <location evidence="1">Mitochondrion</location>
    </subcellularLocation>
</comment>
<comment type="similarity">
    <text evidence="1">Belongs to the radical SAM superfamily. Lipoyl synthase family.</text>
</comment>
<gene>
    <name type="ORF">HCDG_07601</name>
</gene>
<feature type="transit peptide" description="Mitochondrion" evidence="1">
    <location>
        <begin position="1"/>
        <end position="37"/>
    </location>
</feature>
<feature type="chain" id="PRO_0000398247" description="Lipoyl synthase, mitochondrial">
    <location>
        <begin position="38"/>
        <end position="430"/>
    </location>
</feature>
<feature type="domain" description="Radical SAM core" evidence="2">
    <location>
        <begin position="155"/>
        <end position="376"/>
    </location>
</feature>
<feature type="region of interest" description="Disordered" evidence="3">
    <location>
        <begin position="39"/>
        <end position="59"/>
    </location>
</feature>
<feature type="compositionally biased region" description="Polar residues" evidence="3">
    <location>
        <begin position="39"/>
        <end position="55"/>
    </location>
</feature>
<feature type="binding site" evidence="1">
    <location>
        <position position="141"/>
    </location>
    <ligand>
        <name>[4Fe-4S] cluster</name>
        <dbReference type="ChEBI" id="CHEBI:49883"/>
        <label>1</label>
    </ligand>
</feature>
<feature type="binding site" evidence="1">
    <location>
        <position position="146"/>
    </location>
    <ligand>
        <name>[4Fe-4S] cluster</name>
        <dbReference type="ChEBI" id="CHEBI:49883"/>
        <label>1</label>
    </ligand>
</feature>
<feature type="binding site" evidence="1">
    <location>
        <position position="152"/>
    </location>
    <ligand>
        <name>[4Fe-4S] cluster</name>
        <dbReference type="ChEBI" id="CHEBI:49883"/>
        <label>1</label>
    </ligand>
</feature>
<feature type="binding site" evidence="1">
    <location>
        <position position="172"/>
    </location>
    <ligand>
        <name>[4Fe-4S] cluster</name>
        <dbReference type="ChEBI" id="CHEBI:49883"/>
        <label>2</label>
        <note>4Fe-4S-S-AdoMet</note>
    </ligand>
</feature>
<feature type="binding site" evidence="1">
    <location>
        <position position="176"/>
    </location>
    <ligand>
        <name>[4Fe-4S] cluster</name>
        <dbReference type="ChEBI" id="CHEBI:49883"/>
        <label>2</label>
        <note>4Fe-4S-S-AdoMet</note>
    </ligand>
</feature>
<feature type="binding site" evidence="1">
    <location>
        <position position="179"/>
    </location>
    <ligand>
        <name>[4Fe-4S] cluster</name>
        <dbReference type="ChEBI" id="CHEBI:49883"/>
        <label>2</label>
        <note>4Fe-4S-S-AdoMet</note>
    </ligand>
</feature>
<feature type="binding site" evidence="1">
    <location>
        <position position="387"/>
    </location>
    <ligand>
        <name>[4Fe-4S] cluster</name>
        <dbReference type="ChEBI" id="CHEBI:49883"/>
        <label>1</label>
    </ligand>
</feature>
<sequence>MATSAGKLRTLYSAHSSLSSLPPSARPTLQLATLRSYATTTPHDSPIGNTSNTPPTVKRPATAFKDKLNAGPAFSDFVSGKKDEPLDPAEAYALKTALVGPPGRKKEITRLPPWLKTPIPDSSNYKRIKNDLRGLNLHTVCEEARCPNIADCWGGSSKSAATATIMLMGDTCTRGCRFCSVKTSNKPPPLDPHEPDNTAEALSRWGLGYVVLTTVDRDDLADGGARHCAETVMKIKQKAPNILVECLTGDYAGDLDMVALVANSGLDVFAHNVETVEALTPFVRDRRASFQQSLRVLKAAKAAKPELITKTSLMLGLGETEAQLWDALRALRAINVDVVTFGQYMRPTKRHMAVHEYVRPDVFDLWKERALEMGFLYCASGPLVRSSYKAGEAFIENVLKKRKGGNAGSVNEKVTTSENVKKLVAGEAMR</sequence>